<proteinExistence type="inferred from homology"/>
<feature type="chain" id="PRO_0000307464" description="Triosephosphate isomerase">
    <location>
        <begin position="1"/>
        <end position="255"/>
    </location>
</feature>
<feature type="active site" description="Electrophile" evidence="1">
    <location>
        <position position="95"/>
    </location>
</feature>
<feature type="active site" description="Proton acceptor" evidence="1">
    <location>
        <position position="167"/>
    </location>
</feature>
<feature type="binding site" evidence="1">
    <location>
        <begin position="9"/>
        <end position="11"/>
    </location>
    <ligand>
        <name>substrate</name>
    </ligand>
</feature>
<feature type="binding site" evidence="1">
    <location>
        <position position="173"/>
    </location>
    <ligand>
        <name>substrate</name>
    </ligand>
</feature>
<feature type="binding site" evidence="1">
    <location>
        <position position="212"/>
    </location>
    <ligand>
        <name>substrate</name>
    </ligand>
</feature>
<feature type="binding site" evidence="1">
    <location>
        <begin position="233"/>
        <end position="234"/>
    </location>
    <ligand>
        <name>substrate</name>
    </ligand>
</feature>
<comment type="function">
    <text evidence="1">Involved in the gluconeogenesis. Catalyzes stereospecifically the conversion of dihydroxyacetone phosphate (DHAP) to D-glyceraldehyde-3-phosphate (G3P).</text>
</comment>
<comment type="catalytic activity">
    <reaction evidence="1">
        <text>D-glyceraldehyde 3-phosphate = dihydroxyacetone phosphate</text>
        <dbReference type="Rhea" id="RHEA:18585"/>
        <dbReference type="ChEBI" id="CHEBI:57642"/>
        <dbReference type="ChEBI" id="CHEBI:59776"/>
        <dbReference type="EC" id="5.3.1.1"/>
    </reaction>
</comment>
<comment type="pathway">
    <text evidence="1">Carbohydrate biosynthesis; gluconeogenesis.</text>
</comment>
<comment type="pathway">
    <text evidence="1">Carbohydrate degradation; glycolysis; D-glyceraldehyde 3-phosphate from glycerone phosphate: step 1/1.</text>
</comment>
<comment type="subunit">
    <text evidence="1">Homodimer.</text>
</comment>
<comment type="subcellular location">
    <subcellularLocation>
        <location evidence="1">Cytoplasm</location>
    </subcellularLocation>
</comment>
<comment type="similarity">
    <text evidence="1">Belongs to the triosephosphate isomerase family.</text>
</comment>
<protein>
    <recommendedName>
        <fullName evidence="1">Triosephosphate isomerase</fullName>
        <shortName evidence="1">TIM</shortName>
        <shortName evidence="1">TPI</shortName>
        <ecNumber evidence="1">5.3.1.1</ecNumber>
    </recommendedName>
    <alternativeName>
        <fullName evidence="1">Triose-phosphate isomerase</fullName>
    </alternativeName>
</protein>
<dbReference type="EC" id="5.3.1.1" evidence="1"/>
<dbReference type="EMBL" id="CP000247">
    <property type="protein sequence ID" value="ABG72084.1"/>
    <property type="molecule type" value="Genomic_DNA"/>
</dbReference>
<dbReference type="RefSeq" id="WP_001216325.1">
    <property type="nucleotide sequence ID" value="NC_008253.1"/>
</dbReference>
<dbReference type="SMR" id="Q0TAE5"/>
<dbReference type="GeneID" id="93777979"/>
<dbReference type="KEGG" id="ecp:ECP_4128"/>
<dbReference type="HOGENOM" id="CLU_024251_2_1_6"/>
<dbReference type="UniPathway" id="UPA00109">
    <property type="reaction ID" value="UER00189"/>
</dbReference>
<dbReference type="UniPathway" id="UPA00138"/>
<dbReference type="Proteomes" id="UP000009182">
    <property type="component" value="Chromosome"/>
</dbReference>
<dbReference type="GO" id="GO:0005829">
    <property type="term" value="C:cytosol"/>
    <property type="evidence" value="ECO:0007669"/>
    <property type="project" value="TreeGrafter"/>
</dbReference>
<dbReference type="GO" id="GO:0004807">
    <property type="term" value="F:triose-phosphate isomerase activity"/>
    <property type="evidence" value="ECO:0007669"/>
    <property type="project" value="UniProtKB-UniRule"/>
</dbReference>
<dbReference type="GO" id="GO:0006094">
    <property type="term" value="P:gluconeogenesis"/>
    <property type="evidence" value="ECO:0007669"/>
    <property type="project" value="UniProtKB-UniRule"/>
</dbReference>
<dbReference type="GO" id="GO:0046166">
    <property type="term" value="P:glyceraldehyde-3-phosphate biosynthetic process"/>
    <property type="evidence" value="ECO:0007669"/>
    <property type="project" value="TreeGrafter"/>
</dbReference>
<dbReference type="GO" id="GO:0019563">
    <property type="term" value="P:glycerol catabolic process"/>
    <property type="evidence" value="ECO:0007669"/>
    <property type="project" value="TreeGrafter"/>
</dbReference>
<dbReference type="GO" id="GO:0006096">
    <property type="term" value="P:glycolytic process"/>
    <property type="evidence" value="ECO:0007669"/>
    <property type="project" value="UniProtKB-UniRule"/>
</dbReference>
<dbReference type="CDD" id="cd00311">
    <property type="entry name" value="TIM"/>
    <property type="match status" value="1"/>
</dbReference>
<dbReference type="FunFam" id="3.20.20.70:FF:000020">
    <property type="entry name" value="Triosephosphate isomerase"/>
    <property type="match status" value="1"/>
</dbReference>
<dbReference type="Gene3D" id="3.20.20.70">
    <property type="entry name" value="Aldolase class I"/>
    <property type="match status" value="1"/>
</dbReference>
<dbReference type="HAMAP" id="MF_00147_B">
    <property type="entry name" value="TIM_B"/>
    <property type="match status" value="1"/>
</dbReference>
<dbReference type="InterPro" id="IPR013785">
    <property type="entry name" value="Aldolase_TIM"/>
</dbReference>
<dbReference type="InterPro" id="IPR035990">
    <property type="entry name" value="TIM_sf"/>
</dbReference>
<dbReference type="InterPro" id="IPR022896">
    <property type="entry name" value="TrioseP_Isoase_bac/euk"/>
</dbReference>
<dbReference type="InterPro" id="IPR000652">
    <property type="entry name" value="Triosephosphate_isomerase"/>
</dbReference>
<dbReference type="InterPro" id="IPR020861">
    <property type="entry name" value="Triosephosphate_isomerase_AS"/>
</dbReference>
<dbReference type="NCBIfam" id="TIGR00419">
    <property type="entry name" value="tim"/>
    <property type="match status" value="1"/>
</dbReference>
<dbReference type="PANTHER" id="PTHR21139">
    <property type="entry name" value="TRIOSEPHOSPHATE ISOMERASE"/>
    <property type="match status" value="1"/>
</dbReference>
<dbReference type="PANTHER" id="PTHR21139:SF42">
    <property type="entry name" value="TRIOSEPHOSPHATE ISOMERASE"/>
    <property type="match status" value="1"/>
</dbReference>
<dbReference type="Pfam" id="PF00121">
    <property type="entry name" value="TIM"/>
    <property type="match status" value="1"/>
</dbReference>
<dbReference type="SUPFAM" id="SSF51351">
    <property type="entry name" value="Triosephosphate isomerase (TIM)"/>
    <property type="match status" value="1"/>
</dbReference>
<dbReference type="PROSITE" id="PS00171">
    <property type="entry name" value="TIM_1"/>
    <property type="match status" value="1"/>
</dbReference>
<dbReference type="PROSITE" id="PS51440">
    <property type="entry name" value="TIM_2"/>
    <property type="match status" value="1"/>
</dbReference>
<evidence type="ECO:0000255" key="1">
    <source>
        <dbReference type="HAMAP-Rule" id="MF_00147"/>
    </source>
</evidence>
<accession>Q0TAE5</accession>
<sequence>MRHPLVMGNWKLNGSRHMVHELVSNLRKELAGVAGCAVAIAPPEMYIDMAKREAEGSHIMLGAQNVDLNLSGAFTGETSAAMLKDIGAQYIIIGHSERRTYHKESDELIAKKFAVLKEQGLTPVLCIGETEAENEAGKTEEVCARQIDAVLKTQGAAAFEGAVIAYEPVWAIGTGKSATPAQAQAVHKFIRDHIAKVDANIAEQVIIQYGGSVNASNAAELFAQPDIDGALVGGASLKADAFAVIVKAAEAAKQA</sequence>
<name>TPIS_ECOL5</name>
<gene>
    <name evidence="1" type="primary">tpiA</name>
    <name type="ordered locus">ECP_4128</name>
</gene>
<reference key="1">
    <citation type="journal article" date="2006" name="Mol. Microbiol.">
        <title>Role of pathogenicity island-associated integrases in the genome plasticity of uropathogenic Escherichia coli strain 536.</title>
        <authorList>
            <person name="Hochhut B."/>
            <person name="Wilde C."/>
            <person name="Balling G."/>
            <person name="Middendorf B."/>
            <person name="Dobrindt U."/>
            <person name="Brzuszkiewicz E."/>
            <person name="Gottschalk G."/>
            <person name="Carniel E."/>
            <person name="Hacker J."/>
        </authorList>
    </citation>
    <scope>NUCLEOTIDE SEQUENCE [LARGE SCALE GENOMIC DNA]</scope>
    <source>
        <strain>536 / UPEC</strain>
    </source>
</reference>
<keyword id="KW-0963">Cytoplasm</keyword>
<keyword id="KW-0312">Gluconeogenesis</keyword>
<keyword id="KW-0324">Glycolysis</keyword>
<keyword id="KW-0413">Isomerase</keyword>
<organism>
    <name type="scientific">Escherichia coli O6:K15:H31 (strain 536 / UPEC)</name>
    <dbReference type="NCBI Taxonomy" id="362663"/>
    <lineage>
        <taxon>Bacteria</taxon>
        <taxon>Pseudomonadati</taxon>
        <taxon>Pseudomonadota</taxon>
        <taxon>Gammaproteobacteria</taxon>
        <taxon>Enterobacterales</taxon>
        <taxon>Enterobacteriaceae</taxon>
        <taxon>Escherichia</taxon>
    </lineage>
</organism>